<accession>Q63471</accession>
<name>BPIA2_RAT</name>
<keyword id="KW-0044">Antibiotic</keyword>
<keyword id="KW-0929">Antimicrobial</keyword>
<keyword id="KW-1015">Disulfide bond</keyword>
<keyword id="KW-1185">Reference proteome</keyword>
<keyword id="KW-0964">Secreted</keyword>
<keyword id="KW-0732">Signal</keyword>
<sequence>MFQLGSLVVLCGLLIGTSESLLGDVANAVNNLDILNSPSEAVAQNLNLDVGSLQQATTWPSAKDSILETLNKVELGNSNGFTPLNGLLLRVNKFRVLDLQAGLSSNGKDIDLKLPLVFEISFSLPVIGPTLDVAVSLDLLNSVSVQTNAQTGLPGVTLGKCSGNTDKISISLLGRRLPFVNRILDGVSGLLTGAVSILLQNILCPVLQYLLSTMSGSAIQGLLSNVLTGQLAVPL</sequence>
<gene>
    <name type="primary">Bpifa2</name>
    <name type="synonym">Psp</name>
</gene>
<reference key="1">
    <citation type="journal article" date="1992" name="J. Biol. Chem.">
        <title>Neonatal rat submandibular gland protein SMG-A and parotid secretory protein are alternatively regulated members of a salivary protein multigene family.</title>
        <authorList>
            <person name="Mirels L."/>
            <person name="Ball W.D."/>
        </authorList>
    </citation>
    <scope>NUCLEOTIDE SEQUENCE [MRNA]</scope>
    <source>
        <strain>Sprague-Dawley</strain>
        <tissue>Submandibular gland</tissue>
    </source>
</reference>
<reference key="2">
    <citation type="journal article" date="1998" name="Biochem. J.">
        <title>Characterization of the rat salivary-gland B1-immunoreactive proteins.</title>
        <authorList>
            <person name="Mirels L."/>
            <person name="Miranda A.J."/>
            <person name="Ball W.D."/>
        </authorList>
    </citation>
    <scope>NUCLEOTIDE SEQUENCE [MRNA]</scope>
    <scope>TISSUE SPECIFICITY</scope>
    <scope>DEVELOPMENTAL STAGE</scope>
    <source>
        <strain>Sprague-Dawley</strain>
        <tissue>Submandibular gland</tissue>
    </source>
</reference>
<comment type="function">
    <text evidence="2">Has strong antibacterial activity against P.aeruginosa.</text>
</comment>
<comment type="subcellular location">
    <subcellularLocation>
        <location>Secreted</location>
    </subcellularLocation>
</comment>
<comment type="tissue specificity">
    <text evidence="4">Expressed in parotid, submandibular and sublingual glands.</text>
</comment>
<comment type="developmental stage">
    <text evidence="4">Detected in neonatal submandibular and parotid gland secretion but not in sublingual gland secretion (at protein level). In submandibular gland, expressed at high levels in the first postnatal week, with expression diminishing thereafter.</text>
</comment>
<comment type="similarity">
    <text evidence="5">Belongs to the BPI/LBP/Plunc superfamily. Plunc family.</text>
</comment>
<evidence type="ECO:0000250" key="1"/>
<evidence type="ECO:0000250" key="2">
    <source>
        <dbReference type="UniProtKB" id="Q96DR5"/>
    </source>
</evidence>
<evidence type="ECO:0000255" key="3"/>
<evidence type="ECO:0000269" key="4">
    <source>
    </source>
</evidence>
<evidence type="ECO:0000305" key="5"/>
<proteinExistence type="evidence at protein level"/>
<dbReference type="EMBL" id="M83209">
    <property type="protein sequence ID" value="AAC06334.1"/>
    <property type="molecule type" value="mRNA"/>
</dbReference>
<dbReference type="PIR" id="B42337">
    <property type="entry name" value="B42337"/>
</dbReference>
<dbReference type="RefSeq" id="NP_434695.1">
    <property type="nucleotide sequence ID" value="NM_052808.1"/>
</dbReference>
<dbReference type="SMR" id="Q63471"/>
<dbReference type="FunCoup" id="Q63471">
    <property type="interactions" value="12"/>
</dbReference>
<dbReference type="STRING" id="10116.ENSRNOP00000018226"/>
<dbReference type="PaxDb" id="10116-ENSRNOP00000018226"/>
<dbReference type="Ensembl" id="ENSRNOT00000018226.3">
    <property type="protein sequence ID" value="ENSRNOP00000018226.1"/>
    <property type="gene ID" value="ENSRNOG00000013540.3"/>
</dbReference>
<dbReference type="GeneID" id="50585"/>
<dbReference type="KEGG" id="rno:50585"/>
<dbReference type="UCSC" id="RGD:3431">
    <property type="organism name" value="rat"/>
</dbReference>
<dbReference type="AGR" id="RGD:3431"/>
<dbReference type="CTD" id="140683"/>
<dbReference type="RGD" id="3431">
    <property type="gene designation" value="Bpifa2"/>
</dbReference>
<dbReference type="eggNOG" id="ENOG502TE6F">
    <property type="taxonomic scope" value="Eukaryota"/>
</dbReference>
<dbReference type="GeneTree" id="ENSGT01100000263546"/>
<dbReference type="HOGENOM" id="CLU_097590_0_0_1"/>
<dbReference type="InParanoid" id="Q63471"/>
<dbReference type="OMA" id="CPLIHIF"/>
<dbReference type="OrthoDB" id="9838142at2759"/>
<dbReference type="PhylomeDB" id="Q63471"/>
<dbReference type="TreeFam" id="TF337052"/>
<dbReference type="Reactome" id="R-RNO-6803157">
    <property type="pathway name" value="Antimicrobial peptides"/>
</dbReference>
<dbReference type="PRO" id="PR:Q63471"/>
<dbReference type="Proteomes" id="UP000002494">
    <property type="component" value="Chromosome 3"/>
</dbReference>
<dbReference type="GO" id="GO:0005576">
    <property type="term" value="C:extracellular region"/>
    <property type="evidence" value="ECO:0000266"/>
    <property type="project" value="RGD"/>
</dbReference>
<dbReference type="GO" id="GO:0005615">
    <property type="term" value="C:extracellular space"/>
    <property type="evidence" value="ECO:0000266"/>
    <property type="project" value="RGD"/>
</dbReference>
<dbReference type="GO" id="GO:0030141">
    <property type="term" value="C:secretory granule"/>
    <property type="evidence" value="ECO:0000314"/>
    <property type="project" value="RGD"/>
</dbReference>
<dbReference type="GO" id="GO:0001530">
    <property type="term" value="F:lipopolysaccharide binding"/>
    <property type="evidence" value="ECO:0000266"/>
    <property type="project" value="RGD"/>
</dbReference>
<dbReference type="GO" id="GO:0042742">
    <property type="term" value="P:defense response to bacterium"/>
    <property type="evidence" value="ECO:0007669"/>
    <property type="project" value="UniProtKB-KW"/>
</dbReference>
<dbReference type="FunFam" id="3.15.10.10:FF:000014">
    <property type="entry name" value="BPI fold-containing family A member 2"/>
    <property type="match status" value="1"/>
</dbReference>
<dbReference type="Gene3D" id="3.15.10.10">
    <property type="entry name" value="Bactericidal permeability-increasing protein, domain 1"/>
    <property type="match status" value="1"/>
</dbReference>
<dbReference type="InterPro" id="IPR017943">
    <property type="entry name" value="Bactericidal_perm-incr_a/b_dom"/>
</dbReference>
<dbReference type="InterPro" id="IPR052507">
    <property type="entry name" value="BPI_fold-antibacterial"/>
</dbReference>
<dbReference type="InterPro" id="IPR017942">
    <property type="entry name" value="Lipid-bd_serum_glycop_N"/>
</dbReference>
<dbReference type="PANTHER" id="PTHR47145">
    <property type="entry name" value="BPI FOLD-CONTAINING FAMILY A MEMBER 2"/>
    <property type="match status" value="1"/>
</dbReference>
<dbReference type="PANTHER" id="PTHR47145:SF1">
    <property type="entry name" value="BPI FOLD-CONTAINING FAMILY A MEMBER 2"/>
    <property type="match status" value="1"/>
</dbReference>
<dbReference type="Pfam" id="PF01273">
    <property type="entry name" value="LBP_BPI_CETP"/>
    <property type="match status" value="1"/>
</dbReference>
<dbReference type="SUPFAM" id="SSF55394">
    <property type="entry name" value="Bactericidal permeability-increasing protein, BPI"/>
    <property type="match status" value="1"/>
</dbReference>
<organism>
    <name type="scientific">Rattus norvegicus</name>
    <name type="common">Rat</name>
    <dbReference type="NCBI Taxonomy" id="10116"/>
    <lineage>
        <taxon>Eukaryota</taxon>
        <taxon>Metazoa</taxon>
        <taxon>Chordata</taxon>
        <taxon>Craniata</taxon>
        <taxon>Vertebrata</taxon>
        <taxon>Euteleostomi</taxon>
        <taxon>Mammalia</taxon>
        <taxon>Eutheria</taxon>
        <taxon>Euarchontoglires</taxon>
        <taxon>Glires</taxon>
        <taxon>Rodentia</taxon>
        <taxon>Myomorpha</taxon>
        <taxon>Muroidea</taxon>
        <taxon>Muridae</taxon>
        <taxon>Murinae</taxon>
        <taxon>Rattus</taxon>
    </lineage>
</organism>
<protein>
    <recommendedName>
        <fullName>BPI fold-containing family A member 2</fullName>
    </recommendedName>
    <alternativeName>
        <fullName>Neonatal submandibular gland protein</fullName>
    </alternativeName>
    <alternativeName>
        <fullName>Parotid secretory protein</fullName>
        <shortName>PSP</shortName>
    </alternativeName>
</protein>
<feature type="signal peptide" evidence="3">
    <location>
        <begin position="1"/>
        <end position="20"/>
    </location>
</feature>
<feature type="chain" id="PRO_0000017186" description="BPI fold-containing family A member 2">
    <location>
        <begin position="21"/>
        <end position="235"/>
    </location>
</feature>
<feature type="disulfide bond" evidence="1">
    <location>
        <begin position="161"/>
        <end position="204"/>
    </location>
</feature>